<sequence length="32" mass="3466">IPACMVEDGGCWDPLGEAFNSATQRAETLRNL</sequence>
<organism>
    <name type="scientific">Rattus norvegicus</name>
    <name type="common">Rat</name>
    <dbReference type="NCBI Taxonomy" id="10116"/>
    <lineage>
        <taxon>Eukaryota</taxon>
        <taxon>Metazoa</taxon>
        <taxon>Chordata</taxon>
        <taxon>Craniata</taxon>
        <taxon>Vertebrata</taxon>
        <taxon>Euteleostomi</taxon>
        <taxon>Mammalia</taxon>
        <taxon>Eutheria</taxon>
        <taxon>Euarchontoglires</taxon>
        <taxon>Glires</taxon>
        <taxon>Rodentia</taxon>
        <taxon>Myomorpha</taxon>
        <taxon>Muroidea</taxon>
        <taxon>Muridae</taxon>
        <taxon>Murinae</taxon>
        <taxon>Rattus</taxon>
    </lineage>
</organism>
<feature type="chain" id="PRO_0000181327" description="Growth hormone-related protein 4">
    <location>
        <begin position="1"/>
        <end position="32" status="greater than"/>
    </location>
</feature>
<feature type="disulfide bond" evidence="1">
    <location>
        <begin position="4"/>
        <end position="11"/>
    </location>
</feature>
<feature type="non-terminal residue">
    <location>
        <position position="32"/>
    </location>
</feature>
<accession>P33581</accession>
<dbReference type="PIR" id="D60580">
    <property type="entry name" value="D60580"/>
</dbReference>
<dbReference type="SMR" id="P33581"/>
<dbReference type="InParanoid" id="P33581"/>
<dbReference type="Proteomes" id="UP000002494">
    <property type="component" value="Unplaced"/>
</dbReference>
<dbReference type="GO" id="GO:0005576">
    <property type="term" value="C:extracellular region"/>
    <property type="evidence" value="ECO:0007669"/>
    <property type="project" value="UniProtKB-SubCell"/>
</dbReference>
<dbReference type="GO" id="GO:0005179">
    <property type="term" value="F:hormone activity"/>
    <property type="evidence" value="ECO:0007669"/>
    <property type="project" value="UniProtKB-KW"/>
</dbReference>
<comment type="subcellular location">
    <subcellularLocation>
        <location>Secreted</location>
    </subcellularLocation>
</comment>
<comment type="tissue specificity">
    <text>Placental basal zone cells.</text>
</comment>
<comment type="developmental stage">
    <text>Mid to late gestation (gestation day 15).</text>
</comment>
<comment type="PTM">
    <text>Glycosylated.</text>
</comment>
<comment type="similarity">
    <text evidence="2">Belongs to the somatotropin/prolactin family.</text>
</comment>
<keyword id="KW-0903">Direct protein sequencing</keyword>
<keyword id="KW-1015">Disulfide bond</keyword>
<keyword id="KW-0325">Glycoprotein</keyword>
<keyword id="KW-0372">Hormone</keyword>
<keyword id="KW-1185">Reference proteome</keyword>
<keyword id="KW-0964">Secreted</keyword>
<evidence type="ECO:0000255" key="1"/>
<evidence type="ECO:0000305" key="2"/>
<name>GHR4_RAT</name>
<protein>
    <recommendedName>
        <fullName>Growth hormone-related protein 4</fullName>
    </recommendedName>
</protein>
<reference key="1">
    <citation type="journal article" date="1990" name="Endocrinology">
        <title>Identification of a novel family of growth hormone-related proteins secreted by rat placenta.</title>
        <authorList>
            <person name="Ogilvie S."/>
            <person name="Buhi W.C."/>
            <person name="Olson J.A."/>
            <person name="Shiverick K.T."/>
        </authorList>
    </citation>
    <scope>PROTEIN SEQUENCE</scope>
    <source>
        <tissue>Placenta</tissue>
    </source>
</reference>
<proteinExistence type="evidence at protein level"/>